<name>MT_PLEAT</name>
<protein>
    <recommendedName>
        <fullName>Metallothionein</fullName>
        <shortName>MT</shortName>
    </recommendedName>
</protein>
<comment type="function">
    <text evidence="1">Metallothioneins have a high content of cysteine residues that bind various heavy metals.</text>
</comment>
<comment type="domain">
    <text>Class I metallothioneins contain 2 metal-binding domains: four divalent ions are chelated within cluster A of the alpha domain and are coordinated via cysteinyl thiolate bridges to 11 cysteine ligands. Cluster B, the corresponding region within the beta domain, can ligate three divalent ions to 9 cysteines.</text>
</comment>
<comment type="similarity">
    <text evidence="4">Belongs to the metallothionein superfamily. Type 1 family.</text>
</comment>
<feature type="chain" id="PRO_0000197308" description="Metallothionein">
    <location>
        <begin position="1"/>
        <end position="61"/>
    </location>
</feature>
<feature type="region of interest" description="Beta">
    <location>
        <begin position="1"/>
        <end position="28"/>
    </location>
</feature>
<feature type="region of interest" description="Alpha">
    <location>
        <begin position="29"/>
        <end position="61"/>
    </location>
</feature>
<feature type="binding site" evidence="2">
    <location>
        <position position="4"/>
    </location>
    <ligand>
        <name>a divalent metal cation</name>
        <dbReference type="ChEBI" id="CHEBI:60240"/>
        <label>1</label>
        <note>in cluster B</note>
    </ligand>
</feature>
<feature type="binding site" evidence="2">
    <location>
        <position position="6"/>
    </location>
    <ligand>
        <name>a divalent metal cation</name>
        <dbReference type="ChEBI" id="CHEBI:60240"/>
        <label>1</label>
        <note>in cluster B</note>
    </ligand>
</feature>
<feature type="binding site" evidence="2">
    <location>
        <position position="6"/>
    </location>
    <ligand>
        <name>a divalent metal cation</name>
        <dbReference type="ChEBI" id="CHEBI:60240"/>
        <label>2</label>
        <note>in cluster B</note>
    </ligand>
</feature>
<feature type="binding site" evidence="2">
    <location>
        <position position="12"/>
    </location>
    <ligand>
        <name>a divalent metal cation</name>
        <dbReference type="ChEBI" id="CHEBI:60240"/>
        <label>2</label>
        <note>in cluster B</note>
    </ligand>
</feature>
<feature type="binding site" evidence="2">
    <location>
        <position position="14"/>
    </location>
    <ligand>
        <name>a divalent metal cation</name>
        <dbReference type="ChEBI" id="CHEBI:60240"/>
        <label>2</label>
        <note>in cluster B</note>
    </ligand>
</feature>
<feature type="binding site" evidence="2">
    <location>
        <position position="14"/>
    </location>
    <ligand>
        <name>a divalent metal cation</name>
        <dbReference type="ChEBI" id="CHEBI:60240"/>
        <label>3</label>
        <note>in cluster B</note>
    </ligand>
</feature>
<feature type="binding site" evidence="2">
    <location>
        <position position="18"/>
    </location>
    <ligand>
        <name>a divalent metal cation</name>
        <dbReference type="ChEBI" id="CHEBI:60240"/>
        <label>3</label>
        <note>in cluster B</note>
    </ligand>
</feature>
<feature type="binding site" evidence="2">
    <location>
        <position position="20"/>
    </location>
    <ligand>
        <name>a divalent metal cation</name>
        <dbReference type="ChEBI" id="CHEBI:60240"/>
        <label>1</label>
        <note>in cluster B</note>
    </ligand>
</feature>
<feature type="binding site" evidence="2">
    <location>
        <position position="23"/>
    </location>
    <ligand>
        <name>a divalent metal cation</name>
        <dbReference type="ChEBI" id="CHEBI:60240"/>
        <label>1</label>
        <note>in cluster B</note>
    </ligand>
</feature>
<feature type="binding site" evidence="2">
    <location>
        <position position="23"/>
    </location>
    <ligand>
        <name>a divalent metal cation</name>
        <dbReference type="ChEBI" id="CHEBI:60240"/>
        <label>3</label>
        <note>in cluster B</note>
    </ligand>
</feature>
<feature type="binding site" evidence="2">
    <location>
        <position position="25"/>
    </location>
    <ligand>
        <name>a divalent metal cation</name>
        <dbReference type="ChEBI" id="CHEBI:60240"/>
        <label>2</label>
        <note>in cluster B</note>
    </ligand>
</feature>
<feature type="binding site" evidence="2">
    <location>
        <position position="28"/>
    </location>
    <ligand>
        <name>a divalent metal cation</name>
        <dbReference type="ChEBI" id="CHEBI:60240"/>
        <label>3</label>
        <note>in cluster B</note>
    </ligand>
</feature>
<feature type="binding site" evidence="2">
    <location>
        <position position="33"/>
    </location>
    <ligand>
        <name>a divalent metal cation</name>
        <dbReference type="ChEBI" id="CHEBI:60240"/>
        <label>4</label>
        <note>in cluster A</note>
    </ligand>
</feature>
<feature type="binding site" evidence="2">
    <location>
        <position position="34"/>
    </location>
    <ligand>
        <name>a divalent metal cation</name>
        <dbReference type="ChEBI" id="CHEBI:60240"/>
        <label>4</label>
        <note>in cluster A</note>
    </ligand>
</feature>
<feature type="binding site" evidence="2">
    <location>
        <position position="34"/>
    </location>
    <ligand>
        <name>a divalent metal cation</name>
        <dbReference type="ChEBI" id="CHEBI:60240"/>
        <label>5</label>
        <note>in cluster A</note>
    </ligand>
</feature>
<feature type="binding site" evidence="2">
    <location>
        <position position="36"/>
    </location>
    <ligand>
        <name>a divalent metal cation</name>
        <dbReference type="ChEBI" id="CHEBI:60240"/>
        <label>5</label>
        <note>in cluster A</note>
    </ligand>
</feature>
<feature type="binding site" evidence="2">
    <location>
        <position position="37"/>
    </location>
    <ligand>
        <name>a divalent metal cation</name>
        <dbReference type="ChEBI" id="CHEBI:60240"/>
        <label>5</label>
        <note>in cluster A</note>
    </ligand>
</feature>
<feature type="binding site" evidence="2">
    <location>
        <position position="37"/>
    </location>
    <ligand>
        <name>a divalent metal cation</name>
        <dbReference type="ChEBI" id="CHEBI:60240"/>
        <label>6</label>
        <note>in cluster A</note>
    </ligand>
</feature>
<feature type="binding site" evidence="2">
    <location>
        <position position="41"/>
    </location>
    <ligand>
        <name>a divalent metal cation</name>
        <dbReference type="ChEBI" id="CHEBI:60240"/>
        <label>6</label>
        <note>in cluster A</note>
    </ligand>
</feature>
<feature type="binding site" evidence="2">
    <location>
        <position position="44"/>
    </location>
    <ligand>
        <name>a divalent metal cation</name>
        <dbReference type="ChEBI" id="CHEBI:60240"/>
        <label>4</label>
        <note>in cluster A</note>
    </ligand>
</feature>
<feature type="binding site" evidence="2">
    <location>
        <position position="44"/>
    </location>
    <ligand>
        <name>a divalent metal cation</name>
        <dbReference type="ChEBI" id="CHEBI:60240"/>
        <label>6</label>
        <note>in cluster A</note>
    </ligand>
</feature>
<feature type="binding site" evidence="2">
    <location>
        <position position="48"/>
    </location>
    <ligand>
        <name>a divalent metal cation</name>
        <dbReference type="ChEBI" id="CHEBI:60240"/>
        <label>4</label>
        <note>in cluster A</note>
    </ligand>
</feature>
<feature type="binding site" evidence="2">
    <location>
        <position position="50"/>
    </location>
    <ligand>
        <name>a divalent metal cation</name>
        <dbReference type="ChEBI" id="CHEBI:60240"/>
        <label>5</label>
        <note>in cluster A</note>
    </ligand>
</feature>
<feature type="binding site" evidence="2">
    <location>
        <position position="50"/>
    </location>
    <ligand>
        <name>a divalent metal cation</name>
        <dbReference type="ChEBI" id="CHEBI:60240"/>
        <label>7</label>
        <note>in cluster A</note>
    </ligand>
</feature>
<feature type="binding site" evidence="3">
    <location>
        <position position="55"/>
    </location>
    <ligand>
        <name>a divalent metal cation</name>
        <dbReference type="ChEBI" id="CHEBI:60240"/>
        <label>7</label>
        <note>in cluster A</note>
    </ligand>
</feature>
<feature type="binding site" evidence="2">
    <location>
        <position position="59"/>
    </location>
    <ligand>
        <name>a divalent metal cation</name>
        <dbReference type="ChEBI" id="CHEBI:60240"/>
        <label>7</label>
        <note>in cluster A</note>
    </ligand>
</feature>
<feature type="binding site" evidence="2">
    <location>
        <position position="60"/>
    </location>
    <ligand>
        <name>a divalent metal cation</name>
        <dbReference type="ChEBI" id="CHEBI:60240"/>
        <label>6</label>
        <note>in cluster A</note>
    </ligand>
</feature>
<feature type="binding site" evidence="2">
    <location>
        <position position="60"/>
    </location>
    <ligand>
        <name>a divalent metal cation</name>
        <dbReference type="ChEBI" id="CHEBI:60240"/>
        <label>7</label>
        <note>in cluster A</note>
    </ligand>
</feature>
<gene>
    <name type="primary">mt</name>
</gene>
<organism>
    <name type="scientific">Plecoglossus altivelis</name>
    <name type="common">Ayu</name>
    <dbReference type="NCBI Taxonomy" id="61084"/>
    <lineage>
        <taxon>Eukaryota</taxon>
        <taxon>Metazoa</taxon>
        <taxon>Chordata</taxon>
        <taxon>Craniata</taxon>
        <taxon>Vertebrata</taxon>
        <taxon>Euteleostomi</taxon>
        <taxon>Actinopterygii</taxon>
        <taxon>Neopterygii</taxon>
        <taxon>Teleostei</taxon>
        <taxon>Stomiati</taxon>
        <taxon>Osmeriformes</taxon>
        <taxon>Plecoglossus</taxon>
    </lineage>
</organism>
<keyword id="KW-0479">Metal-binding</keyword>
<keyword id="KW-0480">Metal-thiolate cluster</keyword>
<dbReference type="EMBL" id="AY208860">
    <property type="protein sequence ID" value="AAP43669.1"/>
    <property type="molecule type" value="Genomic_DNA"/>
</dbReference>
<dbReference type="GO" id="GO:0046872">
    <property type="term" value="F:metal ion binding"/>
    <property type="evidence" value="ECO:0007669"/>
    <property type="project" value="UniProtKB-KW"/>
</dbReference>
<dbReference type="FunFam" id="4.10.10.10:FF:000001">
    <property type="entry name" value="Metallothionein"/>
    <property type="match status" value="1"/>
</dbReference>
<dbReference type="Gene3D" id="4.10.10.10">
    <property type="entry name" value="Metallothionein Isoform II"/>
    <property type="match status" value="1"/>
</dbReference>
<dbReference type="InterPro" id="IPR017854">
    <property type="entry name" value="Metalthion_dom_sf"/>
</dbReference>
<dbReference type="InterPro" id="IPR023587">
    <property type="entry name" value="Metalthion_dom_sf_vert"/>
</dbReference>
<dbReference type="InterPro" id="IPR000006">
    <property type="entry name" value="Metalthion_vert"/>
</dbReference>
<dbReference type="InterPro" id="IPR018064">
    <property type="entry name" value="Metalthion_vert_metal_BS"/>
</dbReference>
<dbReference type="Pfam" id="PF00131">
    <property type="entry name" value="Metallothio"/>
    <property type="match status" value="1"/>
</dbReference>
<dbReference type="PRINTS" id="PR00860">
    <property type="entry name" value="MTVERTEBRATE"/>
</dbReference>
<dbReference type="SUPFAM" id="SSF57868">
    <property type="entry name" value="Metallothionein"/>
    <property type="match status" value="1"/>
</dbReference>
<dbReference type="PROSITE" id="PS00203">
    <property type="entry name" value="METALLOTHIONEIN_VRT"/>
    <property type="match status" value="1"/>
</dbReference>
<accession>Q6XUW5</accession>
<proteinExistence type="inferred from homology"/>
<sequence length="61" mass="6091">MDPCECSKTGSCNCGGNCSCTNCACTSCKKTSCCSCCPAGCSKCASGCVCKGKTCDKTCCQ</sequence>
<evidence type="ECO:0000250" key="1"/>
<evidence type="ECO:0000250" key="2">
    <source>
        <dbReference type="UniProtKB" id="P02795"/>
    </source>
</evidence>
<evidence type="ECO:0000250" key="3">
    <source>
        <dbReference type="UniProtKB" id="P62339"/>
    </source>
</evidence>
<evidence type="ECO:0000305" key="4"/>
<reference key="1">
    <citation type="journal article" date="2004" name="Aquat. Toxicol.">
        <title>Cloning and characterization of metallothionein gene in ayu Plecoglossus altivelis.</title>
        <authorList>
            <person name="Lin C.-H."/>
            <person name="John J.A."/>
            <person name="Ou L.W."/>
            <person name="Chen J.-C."/>
            <person name="Lin C.H."/>
            <person name="Chang C.-Y."/>
        </authorList>
    </citation>
    <scope>NUCLEOTIDE SEQUENCE [GENOMIC DNA]</scope>
</reference>